<comment type="function">
    <text evidence="1">Converts GTP to 7,8-dihydroneopterin triphosphate.</text>
</comment>
<comment type="catalytic activity">
    <reaction evidence="1">
        <text>GTP + H2O = 7,8-dihydroneopterin 3'-triphosphate + formate + H(+)</text>
        <dbReference type="Rhea" id="RHEA:17473"/>
        <dbReference type="ChEBI" id="CHEBI:15377"/>
        <dbReference type="ChEBI" id="CHEBI:15378"/>
        <dbReference type="ChEBI" id="CHEBI:15740"/>
        <dbReference type="ChEBI" id="CHEBI:37565"/>
        <dbReference type="ChEBI" id="CHEBI:58462"/>
        <dbReference type="EC" id="3.5.4.16"/>
    </reaction>
</comment>
<comment type="pathway">
    <text evidence="1">Cofactor biosynthesis; 7,8-dihydroneopterin triphosphate biosynthesis; 7,8-dihydroneopterin triphosphate from GTP: step 1/1.</text>
</comment>
<comment type="similarity">
    <text evidence="1">Belongs to the GTP cyclohydrolase IV family.</text>
</comment>
<sequence length="294" mass="32773">MNAQLPDVSVSQLPCNLSPLNWVGMQHIDLPTVIDTANQTVNTKVDVYVNLPKSSVKGIHMSRLYHLINHLSVLNTMSIKSVLKQMIDSHQDCGTTAAKIVFKFDLLLKRDAIVSTALSGWKSYPVIIEASIINELFNIEYKLDISYSSTCPCSAALSRQIIKNGFKADFSSQNLIPSADIEAWLEQYATLATPHSQRSIATVVVQPFDYAHDINFVDLIDSIENTLKTPTQTAVKRADEQAFAKLNGENLMFVEDAARRLKMLLDQKYKFWSAQVVHQESLHPHDAIAVAISS</sequence>
<organism>
    <name type="scientific">Acinetobacter baylyi (strain ATCC 33305 / BD413 / ADP1)</name>
    <dbReference type="NCBI Taxonomy" id="62977"/>
    <lineage>
        <taxon>Bacteria</taxon>
        <taxon>Pseudomonadati</taxon>
        <taxon>Pseudomonadota</taxon>
        <taxon>Gammaproteobacteria</taxon>
        <taxon>Moraxellales</taxon>
        <taxon>Moraxellaceae</taxon>
        <taxon>Acinetobacter</taxon>
    </lineage>
</organism>
<proteinExistence type="inferred from homology"/>
<gene>
    <name evidence="1" type="primary">folE2</name>
    <name type="ordered locus">ACIAD1740</name>
</gene>
<feature type="chain" id="PRO_0000147697" description="GTP cyclohydrolase FolE2">
    <location>
        <begin position="1"/>
        <end position="294"/>
    </location>
</feature>
<feature type="site" description="May be catalytically important" evidence="1">
    <location>
        <position position="151"/>
    </location>
</feature>
<keyword id="KW-0378">Hydrolase</keyword>
<reference key="1">
    <citation type="journal article" date="2004" name="Nucleic Acids Res.">
        <title>Unique features revealed by the genome sequence of Acinetobacter sp. ADP1, a versatile and naturally transformation competent bacterium.</title>
        <authorList>
            <person name="Barbe V."/>
            <person name="Vallenet D."/>
            <person name="Fonknechten N."/>
            <person name="Kreimeyer A."/>
            <person name="Oztas S."/>
            <person name="Labarre L."/>
            <person name="Cruveiller S."/>
            <person name="Robert C."/>
            <person name="Duprat S."/>
            <person name="Wincker P."/>
            <person name="Ornston L.N."/>
            <person name="Weissenbach J."/>
            <person name="Marliere P."/>
            <person name="Cohen G.N."/>
            <person name="Medigue C."/>
        </authorList>
    </citation>
    <scope>NUCLEOTIDE SEQUENCE [LARGE SCALE GENOMIC DNA]</scope>
    <source>
        <strain>ATCC 33305 / BD413 / ADP1</strain>
    </source>
</reference>
<name>GCH4_ACIAD</name>
<protein>
    <recommendedName>
        <fullName evidence="1">GTP cyclohydrolase FolE2</fullName>
        <ecNumber evidence="1">3.5.4.16</ecNumber>
    </recommendedName>
</protein>
<dbReference type="EC" id="3.5.4.16" evidence="1"/>
<dbReference type="EMBL" id="CR543861">
    <property type="protein sequence ID" value="CAG68580.1"/>
    <property type="molecule type" value="Genomic_DNA"/>
</dbReference>
<dbReference type="RefSeq" id="WP_004926735.1">
    <property type="nucleotide sequence ID" value="NC_005966.1"/>
</dbReference>
<dbReference type="SMR" id="Q6FBI2"/>
<dbReference type="STRING" id="202950.GCA_001485005_03116"/>
<dbReference type="DNASU" id="2878385"/>
<dbReference type="GeneID" id="45234125"/>
<dbReference type="KEGG" id="aci:ACIAD1740"/>
<dbReference type="eggNOG" id="COG1469">
    <property type="taxonomic scope" value="Bacteria"/>
</dbReference>
<dbReference type="HOGENOM" id="CLU_062816_0_0_6"/>
<dbReference type="OrthoDB" id="239637at2"/>
<dbReference type="BioCyc" id="ASP62977:ACIAD_RS08020-MONOMER"/>
<dbReference type="UniPathway" id="UPA00848">
    <property type="reaction ID" value="UER00151"/>
</dbReference>
<dbReference type="Proteomes" id="UP000000430">
    <property type="component" value="Chromosome"/>
</dbReference>
<dbReference type="GO" id="GO:0003934">
    <property type="term" value="F:GTP cyclohydrolase I activity"/>
    <property type="evidence" value="ECO:0007669"/>
    <property type="project" value="UniProtKB-UniRule"/>
</dbReference>
<dbReference type="GO" id="GO:0046654">
    <property type="term" value="P:tetrahydrofolate biosynthetic process"/>
    <property type="evidence" value="ECO:0007669"/>
    <property type="project" value="UniProtKB-UniRule"/>
</dbReference>
<dbReference type="Gene3D" id="3.10.270.10">
    <property type="entry name" value="Urate Oxidase"/>
    <property type="match status" value="1"/>
</dbReference>
<dbReference type="HAMAP" id="MF_01527_B">
    <property type="entry name" value="GTP_cyclohydrol_B"/>
    <property type="match status" value="1"/>
</dbReference>
<dbReference type="InterPro" id="IPR022838">
    <property type="entry name" value="GTP_cyclohydrolase_FolE2"/>
</dbReference>
<dbReference type="InterPro" id="IPR003801">
    <property type="entry name" value="GTP_cyclohydrolase_FolE2/MptA"/>
</dbReference>
<dbReference type="NCBIfam" id="NF010200">
    <property type="entry name" value="PRK13674.1-1"/>
    <property type="match status" value="1"/>
</dbReference>
<dbReference type="PANTHER" id="PTHR36445">
    <property type="entry name" value="GTP CYCLOHYDROLASE MPTA"/>
    <property type="match status" value="1"/>
</dbReference>
<dbReference type="PANTHER" id="PTHR36445:SF1">
    <property type="entry name" value="GTP CYCLOHYDROLASE MPTA"/>
    <property type="match status" value="1"/>
</dbReference>
<dbReference type="Pfam" id="PF02649">
    <property type="entry name" value="GCHY-1"/>
    <property type="match status" value="1"/>
</dbReference>
<accession>Q6FBI2</accession>
<evidence type="ECO:0000255" key="1">
    <source>
        <dbReference type="HAMAP-Rule" id="MF_01527"/>
    </source>
</evidence>